<protein>
    <recommendedName>
        <fullName evidence="1">Probable ribosomal RNA small subunit methyltransferase A</fullName>
        <ecNumber evidence="1">2.1.1.-</ecNumber>
    </recommendedName>
    <alternativeName>
        <fullName evidence="1">16S rRNA dimethyladenosine transferase</fullName>
    </alternativeName>
    <alternativeName>
        <fullName evidence="1">16S rRNA dimethylase</fullName>
    </alternativeName>
    <alternativeName>
        <fullName evidence="1">S-adenosylmethionine-6-N',N'-adenosyl(rRNA) dimethyltransferase</fullName>
    </alternativeName>
</protein>
<name>RSMA_METMA</name>
<dbReference type="EC" id="2.1.1.-" evidence="1"/>
<dbReference type="EMBL" id="AE008384">
    <property type="protein sequence ID" value="AAM32235.1"/>
    <property type="status" value="ALT_INIT"/>
    <property type="molecule type" value="Genomic_DNA"/>
</dbReference>
<dbReference type="SMR" id="Q8PU18"/>
<dbReference type="KEGG" id="mma:MM_2539"/>
<dbReference type="PATRIC" id="fig|192952.21.peg.2911"/>
<dbReference type="eggNOG" id="arCOG04131">
    <property type="taxonomic scope" value="Archaea"/>
</dbReference>
<dbReference type="HOGENOM" id="CLU_041220_8_0_2"/>
<dbReference type="Proteomes" id="UP000000595">
    <property type="component" value="Chromosome"/>
</dbReference>
<dbReference type="GO" id="GO:0005737">
    <property type="term" value="C:cytoplasm"/>
    <property type="evidence" value="ECO:0007669"/>
    <property type="project" value="UniProtKB-SubCell"/>
</dbReference>
<dbReference type="GO" id="GO:0003723">
    <property type="term" value="F:RNA binding"/>
    <property type="evidence" value="ECO:0007669"/>
    <property type="project" value="UniProtKB-KW"/>
</dbReference>
<dbReference type="GO" id="GO:0000179">
    <property type="term" value="F:rRNA (adenine-N6,N6-)-dimethyltransferase activity"/>
    <property type="evidence" value="ECO:0007669"/>
    <property type="project" value="InterPro"/>
</dbReference>
<dbReference type="CDD" id="cd02440">
    <property type="entry name" value="AdoMet_MTases"/>
    <property type="match status" value="1"/>
</dbReference>
<dbReference type="FunFam" id="3.40.50.150:FF:000023">
    <property type="entry name" value="Ribosomal RNA small subunit methyltransferase A"/>
    <property type="match status" value="1"/>
</dbReference>
<dbReference type="Gene3D" id="1.10.8.100">
    <property type="entry name" value="Ribosomal RNA adenine dimethylase-like, domain 2"/>
    <property type="match status" value="1"/>
</dbReference>
<dbReference type="Gene3D" id="3.40.50.150">
    <property type="entry name" value="Vaccinia Virus protein VP39"/>
    <property type="match status" value="1"/>
</dbReference>
<dbReference type="HAMAP" id="MF_00607">
    <property type="entry name" value="16SrRNA_methyltr_A"/>
    <property type="match status" value="1"/>
</dbReference>
<dbReference type="InterPro" id="IPR001737">
    <property type="entry name" value="KsgA/Erm"/>
</dbReference>
<dbReference type="InterPro" id="IPR023165">
    <property type="entry name" value="rRNA_Ade_diMease-like_C"/>
</dbReference>
<dbReference type="InterPro" id="IPR020596">
    <property type="entry name" value="rRNA_Ade_Mease_Trfase_CS"/>
</dbReference>
<dbReference type="InterPro" id="IPR020598">
    <property type="entry name" value="rRNA_Ade_methylase_Trfase_N"/>
</dbReference>
<dbReference type="InterPro" id="IPR011530">
    <property type="entry name" value="rRNA_adenine_dimethylase"/>
</dbReference>
<dbReference type="InterPro" id="IPR029063">
    <property type="entry name" value="SAM-dependent_MTases_sf"/>
</dbReference>
<dbReference type="NCBIfam" id="TIGR00755">
    <property type="entry name" value="ksgA"/>
    <property type="match status" value="1"/>
</dbReference>
<dbReference type="PANTHER" id="PTHR11727">
    <property type="entry name" value="DIMETHYLADENOSINE TRANSFERASE"/>
    <property type="match status" value="1"/>
</dbReference>
<dbReference type="PANTHER" id="PTHR11727:SF7">
    <property type="entry name" value="DIMETHYLADENOSINE TRANSFERASE-RELATED"/>
    <property type="match status" value="1"/>
</dbReference>
<dbReference type="Pfam" id="PF00398">
    <property type="entry name" value="RrnaAD"/>
    <property type="match status" value="1"/>
</dbReference>
<dbReference type="SMART" id="SM00650">
    <property type="entry name" value="rADc"/>
    <property type="match status" value="1"/>
</dbReference>
<dbReference type="SUPFAM" id="SSF53335">
    <property type="entry name" value="S-adenosyl-L-methionine-dependent methyltransferases"/>
    <property type="match status" value="1"/>
</dbReference>
<dbReference type="PROSITE" id="PS01131">
    <property type="entry name" value="RRNA_A_DIMETH"/>
    <property type="match status" value="1"/>
</dbReference>
<dbReference type="PROSITE" id="PS51689">
    <property type="entry name" value="SAM_RNA_A_N6_MT"/>
    <property type="match status" value="1"/>
</dbReference>
<gene>
    <name evidence="1" type="primary">rsmA</name>
    <name evidence="1" type="synonym">ksgA</name>
    <name type="ordered locus">MM_2539</name>
</gene>
<reference key="1">
    <citation type="journal article" date="2002" name="J. Mol. Microbiol. Biotechnol.">
        <title>The genome of Methanosarcina mazei: evidence for lateral gene transfer between Bacteria and Archaea.</title>
        <authorList>
            <person name="Deppenmeier U."/>
            <person name="Johann A."/>
            <person name="Hartsch T."/>
            <person name="Merkl R."/>
            <person name="Schmitz R.A."/>
            <person name="Martinez-Arias R."/>
            <person name="Henne A."/>
            <person name="Wiezer A."/>
            <person name="Baeumer S."/>
            <person name="Jacobi C."/>
            <person name="Brueggemann H."/>
            <person name="Lienard T."/>
            <person name="Christmann A."/>
            <person name="Boemecke M."/>
            <person name="Steckel S."/>
            <person name="Bhattacharyya A."/>
            <person name="Lykidis A."/>
            <person name="Overbeek R."/>
            <person name="Klenk H.-P."/>
            <person name="Gunsalus R.P."/>
            <person name="Fritz H.-J."/>
            <person name="Gottschalk G."/>
        </authorList>
    </citation>
    <scope>NUCLEOTIDE SEQUENCE [LARGE SCALE GENOMIC DNA]</scope>
    <source>
        <strain>ATCC BAA-159 / DSM 3647 / Goe1 / Go1 / JCM 11833 / OCM 88</strain>
    </source>
</reference>
<feature type="chain" id="PRO_0000101658" description="Probable ribosomal RNA small subunit methyltransferase A">
    <location>
        <begin position="1"/>
        <end position="271"/>
    </location>
</feature>
<feature type="binding site" evidence="1">
    <location>
        <position position="19"/>
    </location>
    <ligand>
        <name>S-adenosyl-L-methionine</name>
        <dbReference type="ChEBI" id="CHEBI:59789"/>
    </ligand>
</feature>
<feature type="binding site" evidence="1">
    <location>
        <position position="21"/>
    </location>
    <ligand>
        <name>S-adenosyl-L-methionine</name>
        <dbReference type="ChEBI" id="CHEBI:59789"/>
    </ligand>
</feature>
<feature type="binding site" evidence="1">
    <location>
        <position position="46"/>
    </location>
    <ligand>
        <name>S-adenosyl-L-methionine</name>
        <dbReference type="ChEBI" id="CHEBI:59789"/>
    </ligand>
</feature>
<feature type="binding site" evidence="1">
    <location>
        <position position="67"/>
    </location>
    <ligand>
        <name>S-adenosyl-L-methionine</name>
        <dbReference type="ChEBI" id="CHEBI:59789"/>
    </ligand>
</feature>
<feature type="binding site" evidence="1">
    <location>
        <position position="92"/>
    </location>
    <ligand>
        <name>S-adenosyl-L-methionine</name>
        <dbReference type="ChEBI" id="CHEBI:59789"/>
    </ligand>
</feature>
<feature type="binding site" evidence="1">
    <location>
        <position position="107"/>
    </location>
    <ligand>
        <name>S-adenosyl-L-methionine</name>
        <dbReference type="ChEBI" id="CHEBI:59789"/>
    </ligand>
</feature>
<sequence length="271" mass="30460">MVRSILKKYNIKGGTFDQHFLIDAGYLDRIVAAAELSPQDTVLEIGAGIGNLTERLARRAKKVIAVELDPALVSVLHDRFDAAENIEIIAGDALKVDFPEFDKVVSNLPYSISSEITFKLLRHKFKLGVLMYQYEFAVRMVSPPGCKDYSRLTIDTCYFADASIVMKVPKGAFQPAPEVDSAVIKLIPRPAPFEVRDETFFLQFVAAVFSQRRKKLRNAILNTSSLLKIPDIKEIVSQLPEDFMNKRAEDLTPEELASVANMIFDLKSRNF</sequence>
<evidence type="ECO:0000255" key="1">
    <source>
        <dbReference type="HAMAP-Rule" id="MF_00607"/>
    </source>
</evidence>
<evidence type="ECO:0000305" key="2"/>
<accession>Q8PU18</accession>
<proteinExistence type="inferred from homology"/>
<comment type="function">
    <text evidence="1">Specifically dimethylates two adjacent adenosines in the loop of a conserved hairpin near the 3'-end of 16S rRNA in the 30S particle. May play a critical role in biogenesis of 30S subunits.</text>
</comment>
<comment type="subcellular location">
    <subcellularLocation>
        <location evidence="1">Cytoplasm</location>
    </subcellularLocation>
</comment>
<comment type="similarity">
    <text evidence="1">Belongs to the class I-like SAM-binding methyltransferase superfamily. rRNA adenine N(6)-methyltransferase family. RsmA subfamily.</text>
</comment>
<comment type="sequence caution" evidence="2">
    <conflict type="erroneous initiation">
        <sequence resource="EMBL-CDS" id="AAM32235"/>
    </conflict>
</comment>
<organism>
    <name type="scientific">Methanosarcina mazei (strain ATCC BAA-159 / DSM 3647 / Goe1 / Go1 / JCM 11833 / OCM 88)</name>
    <name type="common">Methanosarcina frisia</name>
    <dbReference type="NCBI Taxonomy" id="192952"/>
    <lineage>
        <taxon>Archaea</taxon>
        <taxon>Methanobacteriati</taxon>
        <taxon>Methanobacteriota</taxon>
        <taxon>Stenosarchaea group</taxon>
        <taxon>Methanomicrobia</taxon>
        <taxon>Methanosarcinales</taxon>
        <taxon>Methanosarcinaceae</taxon>
        <taxon>Methanosarcina</taxon>
    </lineage>
</organism>
<keyword id="KW-0963">Cytoplasm</keyword>
<keyword id="KW-0489">Methyltransferase</keyword>
<keyword id="KW-0694">RNA-binding</keyword>
<keyword id="KW-0698">rRNA processing</keyword>
<keyword id="KW-0949">S-adenosyl-L-methionine</keyword>
<keyword id="KW-0808">Transferase</keyword>